<accession>Q21012</accession>
<proteinExistence type="inferred from homology"/>
<evidence type="ECO:0000255" key="1">
    <source>
        <dbReference type="HAMAP-Rule" id="MF_03117"/>
    </source>
</evidence>
<keyword id="KW-0028">Amino-acid biosynthesis</keyword>
<keyword id="KW-0963">Cytoplasm</keyword>
<keyword id="KW-0378">Hydrolase</keyword>
<keyword id="KW-0460">Magnesium</keyword>
<keyword id="KW-0479">Metal-binding</keyword>
<keyword id="KW-0486">Methionine biosynthesis</keyword>
<keyword id="KW-0539">Nucleus</keyword>
<keyword id="KW-1185">Reference proteome</keyword>
<name>ENOPH_CAEEL</name>
<feature type="chain" id="PRO_0000393989" description="Enolase-phosphatase E1">
    <location>
        <begin position="1"/>
        <end position="248"/>
    </location>
</feature>
<feature type="binding site" evidence="1">
    <location>
        <position position="14"/>
    </location>
    <ligand>
        <name>Mg(2+)</name>
        <dbReference type="ChEBI" id="CHEBI:18420"/>
    </ligand>
</feature>
<feature type="binding site" evidence="1">
    <location>
        <position position="16"/>
    </location>
    <ligand>
        <name>Mg(2+)</name>
        <dbReference type="ChEBI" id="CHEBI:18420"/>
    </ligand>
</feature>
<feature type="binding site" evidence="1">
    <location>
        <begin position="145"/>
        <end position="146"/>
    </location>
    <ligand>
        <name>substrate</name>
    </ligand>
</feature>
<feature type="binding site" evidence="1">
    <location>
        <position position="179"/>
    </location>
    <ligand>
        <name>substrate</name>
    </ligand>
</feature>
<feature type="binding site" evidence="1">
    <location>
        <position position="204"/>
    </location>
    <ligand>
        <name>Mg(2+)</name>
        <dbReference type="ChEBI" id="CHEBI:18420"/>
    </ligand>
</feature>
<protein>
    <recommendedName>
        <fullName evidence="1">Enolase-phosphatase E1</fullName>
        <ecNumber evidence="1">3.1.3.77</ecNumber>
    </recommendedName>
    <alternativeName>
        <fullName evidence="1">2,3-diketo-5-methylthio-1-phosphopentane phosphatase</fullName>
    </alternativeName>
</protein>
<reference key="1">
    <citation type="journal article" date="1998" name="Science">
        <title>Genome sequence of the nematode C. elegans: a platform for investigating biology.</title>
        <authorList>
            <consortium name="The C. elegans sequencing consortium"/>
        </authorList>
    </citation>
    <scope>NUCLEOTIDE SEQUENCE [LARGE SCALE GENOMIC DNA]</scope>
    <source>
        <strain>Bristol N2</strain>
    </source>
</reference>
<organism>
    <name type="scientific">Caenorhabditis elegans</name>
    <dbReference type="NCBI Taxonomy" id="6239"/>
    <lineage>
        <taxon>Eukaryota</taxon>
        <taxon>Metazoa</taxon>
        <taxon>Ecdysozoa</taxon>
        <taxon>Nematoda</taxon>
        <taxon>Chromadorea</taxon>
        <taxon>Rhabditida</taxon>
        <taxon>Rhabditina</taxon>
        <taxon>Rhabditomorpha</taxon>
        <taxon>Rhabditoidea</taxon>
        <taxon>Rhabditidae</taxon>
        <taxon>Peloderinae</taxon>
        <taxon>Caenorhabditis</taxon>
    </lineage>
</organism>
<gene>
    <name type="ORF">F58H1.3</name>
</gene>
<sequence>MTTTTIQFNALLLDIEGTITSISFVKDELFPYAFENVGNYLEEHYDNPATQIIVEDLRHIADQQAENDVAVVRIREPRKECIEDVTKNVRHWIKRDKKLTPMKALQGLIWEEAYQRGDVKGHVYPDVLPVLKIVENRKIPIYIYSSGSVHAQKLLFANSIEGDMTKILYGYFDTNIGLKGESNSYTKISERIKIPPSEILFLTDVEAEAAAAKKAGLQTKLVVRPGNAGLTQEAINAYGTIESLEEIL</sequence>
<comment type="function">
    <text evidence="1">Bifunctional enzyme that catalyzes the enolization of 2,3-diketo-5-methylthiopentyl-1-phosphate (DK-MTP-1-P) into the intermediate 2-hydroxy-3-keto-5-methylthiopentenyl-1-phosphate (HK-MTPenyl-1-P), which is then dephosphorylated to form the acireductone 1,2-dihydroxy-3-keto-5-methylthiopentene (DHK-MTPene).</text>
</comment>
<comment type="catalytic activity">
    <reaction evidence="1">
        <text>5-methylsulfanyl-2,3-dioxopentyl phosphate + H2O = 1,2-dihydroxy-5-(methylsulfanyl)pent-1-en-3-one + phosphate</text>
        <dbReference type="Rhea" id="RHEA:21700"/>
        <dbReference type="ChEBI" id="CHEBI:15377"/>
        <dbReference type="ChEBI" id="CHEBI:43474"/>
        <dbReference type="ChEBI" id="CHEBI:49252"/>
        <dbReference type="ChEBI" id="CHEBI:58828"/>
        <dbReference type="EC" id="3.1.3.77"/>
    </reaction>
</comment>
<comment type="cofactor">
    <cofactor evidence="1">
        <name>Mg(2+)</name>
        <dbReference type="ChEBI" id="CHEBI:18420"/>
    </cofactor>
    <text evidence="1">Binds 1 Mg(2+) ion per subunit.</text>
</comment>
<comment type="pathway">
    <text evidence="1">Amino-acid biosynthesis; L-methionine biosynthesis via salvage pathway; L-methionine from S-methyl-5-thio-alpha-D-ribose 1-phosphate: step 3/6.</text>
</comment>
<comment type="pathway">
    <text evidence="1">Amino-acid biosynthesis; L-methionine biosynthesis via salvage pathway; L-methionine from S-methyl-5-thio-alpha-D-ribose 1-phosphate: step 4/6.</text>
</comment>
<comment type="subunit">
    <text evidence="1">Monomer.</text>
</comment>
<comment type="subcellular location">
    <subcellularLocation>
        <location evidence="1">Cytoplasm</location>
    </subcellularLocation>
    <subcellularLocation>
        <location evidence="1">Nucleus</location>
    </subcellularLocation>
</comment>
<comment type="similarity">
    <text evidence="1">Belongs to the HAD-like hydrolase superfamily. MasA/MtnC family.</text>
</comment>
<dbReference type="EC" id="3.1.3.77" evidence="1"/>
<dbReference type="EMBL" id="Z75954">
    <property type="protein sequence ID" value="CAB00106.3"/>
    <property type="molecule type" value="Genomic_DNA"/>
</dbReference>
<dbReference type="RefSeq" id="NP_001041138.2">
    <property type="nucleotide sequence ID" value="NM_001047673.4"/>
</dbReference>
<dbReference type="SMR" id="Q21012"/>
<dbReference type="BioGRID" id="44658">
    <property type="interactions" value="2"/>
</dbReference>
<dbReference type="FunCoup" id="Q21012">
    <property type="interactions" value="3219"/>
</dbReference>
<dbReference type="STRING" id="6239.F58H1.3a.2"/>
<dbReference type="PaxDb" id="6239-F58H1.3a"/>
<dbReference type="PeptideAtlas" id="Q21012"/>
<dbReference type="EnsemblMetazoa" id="F58H1.3a.1">
    <property type="protein sequence ID" value="F58H1.3a.1"/>
    <property type="gene ID" value="WBGene00010286"/>
</dbReference>
<dbReference type="GeneID" id="179634"/>
<dbReference type="KEGG" id="cel:CELE_F58H1.3"/>
<dbReference type="UCSC" id="F58H1.3a">
    <property type="organism name" value="c. elegans"/>
</dbReference>
<dbReference type="AGR" id="WB:WBGene00010286"/>
<dbReference type="CTD" id="179634"/>
<dbReference type="WormBase" id="F58H1.3a">
    <property type="protein sequence ID" value="CE43080"/>
    <property type="gene ID" value="WBGene00010286"/>
</dbReference>
<dbReference type="eggNOG" id="KOG2630">
    <property type="taxonomic scope" value="Eukaryota"/>
</dbReference>
<dbReference type="GeneTree" id="ENSGT00440000039914"/>
<dbReference type="HOGENOM" id="CLU_023273_0_0_1"/>
<dbReference type="InParanoid" id="Q21012"/>
<dbReference type="OMA" id="LQGMVWE"/>
<dbReference type="OrthoDB" id="272500at2759"/>
<dbReference type="PhylomeDB" id="Q21012"/>
<dbReference type="Reactome" id="R-CEL-1237112">
    <property type="pathway name" value="Methionine salvage pathway"/>
</dbReference>
<dbReference type="UniPathway" id="UPA00904">
    <property type="reaction ID" value="UER00876"/>
</dbReference>
<dbReference type="UniPathway" id="UPA00904">
    <property type="reaction ID" value="UER00877"/>
</dbReference>
<dbReference type="PRO" id="PR:Q21012"/>
<dbReference type="Proteomes" id="UP000001940">
    <property type="component" value="Chromosome V"/>
</dbReference>
<dbReference type="Bgee" id="WBGene00010286">
    <property type="expression patterns" value="Expressed in embryo and 3 other cell types or tissues"/>
</dbReference>
<dbReference type="GO" id="GO:0005737">
    <property type="term" value="C:cytoplasm"/>
    <property type="evidence" value="ECO:0007669"/>
    <property type="project" value="UniProtKB-SubCell"/>
</dbReference>
<dbReference type="GO" id="GO:0005634">
    <property type="term" value="C:nucleus"/>
    <property type="evidence" value="ECO:0007669"/>
    <property type="project" value="UniProtKB-SubCell"/>
</dbReference>
<dbReference type="GO" id="GO:0043874">
    <property type="term" value="F:acireductone synthase activity"/>
    <property type="evidence" value="ECO:0000318"/>
    <property type="project" value="GO_Central"/>
</dbReference>
<dbReference type="GO" id="GO:0000287">
    <property type="term" value="F:magnesium ion binding"/>
    <property type="evidence" value="ECO:0007669"/>
    <property type="project" value="UniProtKB-UniRule"/>
</dbReference>
<dbReference type="GO" id="GO:0019509">
    <property type="term" value="P:L-methionine salvage from methylthioadenosine"/>
    <property type="evidence" value="ECO:0000318"/>
    <property type="project" value="GO_Central"/>
</dbReference>
<dbReference type="CDD" id="cd01629">
    <property type="entry name" value="HAD_EP"/>
    <property type="match status" value="1"/>
</dbReference>
<dbReference type="FunFam" id="3.40.50.1000:FF:000079">
    <property type="entry name" value="Enolase-phosphatase E1"/>
    <property type="match status" value="1"/>
</dbReference>
<dbReference type="Gene3D" id="1.10.720.60">
    <property type="match status" value="1"/>
</dbReference>
<dbReference type="Gene3D" id="3.40.50.1000">
    <property type="entry name" value="HAD superfamily/HAD-like"/>
    <property type="match status" value="1"/>
</dbReference>
<dbReference type="HAMAP" id="MF_01681">
    <property type="entry name" value="Salvage_MtnC"/>
    <property type="match status" value="1"/>
</dbReference>
<dbReference type="HAMAP" id="MF_03117">
    <property type="entry name" value="Salvage_MtnC_euk"/>
    <property type="match status" value="1"/>
</dbReference>
<dbReference type="InterPro" id="IPR023943">
    <property type="entry name" value="Enolase-ppase_E1"/>
</dbReference>
<dbReference type="InterPro" id="IPR027511">
    <property type="entry name" value="ENOPH1_eukaryotes"/>
</dbReference>
<dbReference type="InterPro" id="IPR036412">
    <property type="entry name" value="HAD-like_sf"/>
</dbReference>
<dbReference type="InterPro" id="IPR006439">
    <property type="entry name" value="HAD-SF_hydro_IA"/>
</dbReference>
<dbReference type="InterPro" id="IPR023214">
    <property type="entry name" value="HAD_sf"/>
</dbReference>
<dbReference type="NCBIfam" id="TIGR01691">
    <property type="entry name" value="enolase-ppase"/>
    <property type="match status" value="1"/>
</dbReference>
<dbReference type="NCBIfam" id="TIGR01549">
    <property type="entry name" value="HAD-SF-IA-v1"/>
    <property type="match status" value="1"/>
</dbReference>
<dbReference type="PANTHER" id="PTHR20371">
    <property type="entry name" value="ENOLASE-PHOSPHATASE E1"/>
    <property type="match status" value="1"/>
</dbReference>
<dbReference type="PANTHER" id="PTHR20371:SF1">
    <property type="entry name" value="ENOLASE-PHOSPHATASE E1"/>
    <property type="match status" value="1"/>
</dbReference>
<dbReference type="Pfam" id="PF00702">
    <property type="entry name" value="Hydrolase"/>
    <property type="match status" value="1"/>
</dbReference>
<dbReference type="SFLD" id="SFLDG01133">
    <property type="entry name" value="C1.5.4:_Enolase-phosphatase_Li"/>
    <property type="match status" value="1"/>
</dbReference>
<dbReference type="SFLD" id="SFLDF00044">
    <property type="entry name" value="enolase-phosphatase"/>
    <property type="match status" value="1"/>
</dbReference>
<dbReference type="SUPFAM" id="SSF56784">
    <property type="entry name" value="HAD-like"/>
    <property type="match status" value="1"/>
</dbReference>